<sequence>MKALQEKILREGSVSGNDILKVDSFLNHQIDVAFLNEIGREFKERFKGEKVDKIFTIEASGIAIASIVSQYFDNAPVVFAKKSESKNLDKDVYETNVYSFTKAREYSVKVSKKYINKGENILIVDDFLANGRAALGLKDLIEQAEANLVGVGIVIEKGFQAGGALLKANDVRLESLAVVESIDNGTVKFR</sequence>
<protein>
    <recommendedName>
        <fullName evidence="1">Xanthine phosphoribosyltransferase</fullName>
        <shortName evidence="1">XPRTase</shortName>
        <ecNumber evidence="1">2.4.2.22</ecNumber>
    </recommendedName>
</protein>
<dbReference type="EC" id="2.4.2.22" evidence="1"/>
<dbReference type="EMBL" id="AM180355">
    <property type="protein sequence ID" value="CAJ69217.1"/>
    <property type="molecule type" value="Genomic_DNA"/>
</dbReference>
<dbReference type="RefSeq" id="WP_004454633.1">
    <property type="nucleotide sequence ID" value="NZ_JAUPES010000016.1"/>
</dbReference>
<dbReference type="RefSeq" id="YP_001088845.1">
    <property type="nucleotide sequence ID" value="NC_009089.1"/>
</dbReference>
<dbReference type="SMR" id="Q185K4"/>
<dbReference type="STRING" id="272563.CD630_23300"/>
<dbReference type="EnsemblBacteria" id="CAJ69217">
    <property type="protein sequence ID" value="CAJ69217"/>
    <property type="gene ID" value="CD630_23300"/>
</dbReference>
<dbReference type="KEGG" id="cdf:CD630_23300"/>
<dbReference type="KEGG" id="pdc:CDIF630_02568"/>
<dbReference type="PATRIC" id="fig|272563.120.peg.2461"/>
<dbReference type="eggNOG" id="COG0503">
    <property type="taxonomic scope" value="Bacteria"/>
</dbReference>
<dbReference type="OrthoDB" id="9790678at2"/>
<dbReference type="PhylomeDB" id="Q185K4"/>
<dbReference type="BioCyc" id="PDIF272563:G12WB-2482-MONOMER"/>
<dbReference type="UniPathway" id="UPA00602">
    <property type="reaction ID" value="UER00658"/>
</dbReference>
<dbReference type="Proteomes" id="UP000001978">
    <property type="component" value="Chromosome"/>
</dbReference>
<dbReference type="GO" id="GO:0005737">
    <property type="term" value="C:cytoplasm"/>
    <property type="evidence" value="ECO:0007669"/>
    <property type="project" value="UniProtKB-SubCell"/>
</dbReference>
<dbReference type="GO" id="GO:0000310">
    <property type="term" value="F:xanthine phosphoribosyltransferase activity"/>
    <property type="evidence" value="ECO:0007669"/>
    <property type="project" value="UniProtKB-UniRule"/>
</dbReference>
<dbReference type="GO" id="GO:0006166">
    <property type="term" value="P:purine ribonucleoside salvage"/>
    <property type="evidence" value="ECO:0007669"/>
    <property type="project" value="UniProtKB-KW"/>
</dbReference>
<dbReference type="GO" id="GO:0046110">
    <property type="term" value="P:xanthine metabolic process"/>
    <property type="evidence" value="ECO:0007669"/>
    <property type="project" value="InterPro"/>
</dbReference>
<dbReference type="GO" id="GO:0032265">
    <property type="term" value="P:XMP salvage"/>
    <property type="evidence" value="ECO:0007669"/>
    <property type="project" value="UniProtKB-UniRule"/>
</dbReference>
<dbReference type="CDD" id="cd06223">
    <property type="entry name" value="PRTases_typeI"/>
    <property type="match status" value="1"/>
</dbReference>
<dbReference type="Gene3D" id="3.40.50.2020">
    <property type="match status" value="1"/>
</dbReference>
<dbReference type="HAMAP" id="MF_01184">
    <property type="entry name" value="XPRTase"/>
    <property type="match status" value="1"/>
</dbReference>
<dbReference type="InterPro" id="IPR000836">
    <property type="entry name" value="PRibTrfase_dom"/>
</dbReference>
<dbReference type="InterPro" id="IPR029057">
    <property type="entry name" value="PRTase-like"/>
</dbReference>
<dbReference type="InterPro" id="IPR050118">
    <property type="entry name" value="Pur/Pyrimidine_PRTase"/>
</dbReference>
<dbReference type="InterPro" id="IPR010079">
    <property type="entry name" value="Xanthine_PRibTrfase"/>
</dbReference>
<dbReference type="NCBIfam" id="NF006671">
    <property type="entry name" value="PRK09219.1"/>
    <property type="match status" value="1"/>
</dbReference>
<dbReference type="NCBIfam" id="TIGR01744">
    <property type="entry name" value="XPRTase"/>
    <property type="match status" value="1"/>
</dbReference>
<dbReference type="PANTHER" id="PTHR43864">
    <property type="entry name" value="HYPOXANTHINE/GUANINE PHOSPHORIBOSYLTRANSFERASE"/>
    <property type="match status" value="1"/>
</dbReference>
<dbReference type="PANTHER" id="PTHR43864:SF1">
    <property type="entry name" value="XANTHINE PHOSPHORIBOSYLTRANSFERASE"/>
    <property type="match status" value="1"/>
</dbReference>
<dbReference type="Pfam" id="PF00156">
    <property type="entry name" value="Pribosyltran"/>
    <property type="match status" value="1"/>
</dbReference>
<dbReference type="SUPFAM" id="SSF53271">
    <property type="entry name" value="PRTase-like"/>
    <property type="match status" value="1"/>
</dbReference>
<evidence type="ECO:0000255" key="1">
    <source>
        <dbReference type="HAMAP-Rule" id="MF_01184"/>
    </source>
</evidence>
<organism>
    <name type="scientific">Clostridioides difficile (strain 630)</name>
    <name type="common">Peptoclostridium difficile</name>
    <dbReference type="NCBI Taxonomy" id="272563"/>
    <lineage>
        <taxon>Bacteria</taxon>
        <taxon>Bacillati</taxon>
        <taxon>Bacillota</taxon>
        <taxon>Clostridia</taxon>
        <taxon>Peptostreptococcales</taxon>
        <taxon>Peptostreptococcaceae</taxon>
        <taxon>Clostridioides</taxon>
    </lineage>
</organism>
<feature type="chain" id="PRO_0000339685" description="Xanthine phosphoribosyltransferase">
    <location>
        <begin position="1"/>
        <end position="190"/>
    </location>
</feature>
<feature type="binding site" evidence="1">
    <location>
        <position position="20"/>
    </location>
    <ligand>
        <name>xanthine</name>
        <dbReference type="ChEBI" id="CHEBI:17712"/>
    </ligand>
</feature>
<feature type="binding site" evidence="1">
    <location>
        <position position="27"/>
    </location>
    <ligand>
        <name>xanthine</name>
        <dbReference type="ChEBI" id="CHEBI:17712"/>
    </ligand>
</feature>
<feature type="binding site" evidence="1">
    <location>
        <begin position="129"/>
        <end position="133"/>
    </location>
    <ligand>
        <name>5-phospho-alpha-D-ribose 1-diphosphate</name>
        <dbReference type="ChEBI" id="CHEBI:58017"/>
    </ligand>
</feature>
<feature type="binding site" evidence="1">
    <location>
        <position position="157"/>
    </location>
    <ligand>
        <name>xanthine</name>
        <dbReference type="ChEBI" id="CHEBI:17712"/>
    </ligand>
</feature>
<keyword id="KW-0963">Cytoplasm</keyword>
<keyword id="KW-0328">Glycosyltransferase</keyword>
<keyword id="KW-0660">Purine salvage</keyword>
<keyword id="KW-1185">Reference proteome</keyword>
<keyword id="KW-0808">Transferase</keyword>
<proteinExistence type="inferred from homology"/>
<reference key="1">
    <citation type="journal article" date="2006" name="Nat. Genet.">
        <title>The multidrug-resistant human pathogen Clostridium difficile has a highly mobile, mosaic genome.</title>
        <authorList>
            <person name="Sebaihia M."/>
            <person name="Wren B.W."/>
            <person name="Mullany P."/>
            <person name="Fairweather N.F."/>
            <person name="Minton N."/>
            <person name="Stabler R."/>
            <person name="Thomson N.R."/>
            <person name="Roberts A.P."/>
            <person name="Cerdeno-Tarraga A.M."/>
            <person name="Wang H."/>
            <person name="Holden M.T.G."/>
            <person name="Wright A."/>
            <person name="Churcher C."/>
            <person name="Quail M.A."/>
            <person name="Baker S."/>
            <person name="Bason N."/>
            <person name="Brooks K."/>
            <person name="Chillingworth T."/>
            <person name="Cronin A."/>
            <person name="Davis P."/>
            <person name="Dowd L."/>
            <person name="Fraser A."/>
            <person name="Feltwell T."/>
            <person name="Hance Z."/>
            <person name="Holroyd S."/>
            <person name="Jagels K."/>
            <person name="Moule S."/>
            <person name="Mungall K."/>
            <person name="Price C."/>
            <person name="Rabbinowitsch E."/>
            <person name="Sharp S."/>
            <person name="Simmonds M."/>
            <person name="Stevens K."/>
            <person name="Unwin L."/>
            <person name="Whithead S."/>
            <person name="Dupuy B."/>
            <person name="Dougan G."/>
            <person name="Barrell B."/>
            <person name="Parkhill J."/>
        </authorList>
    </citation>
    <scope>NUCLEOTIDE SEQUENCE [LARGE SCALE GENOMIC DNA]</scope>
    <source>
        <strain>630</strain>
    </source>
</reference>
<gene>
    <name evidence="1" type="primary">xpt</name>
    <name type="ordered locus">CD630_23300</name>
</gene>
<name>XPT_CLOD6</name>
<accession>Q185K4</accession>
<comment type="function">
    <text evidence="1">Converts the preformed base xanthine, a product of nucleic acid breakdown, to xanthosine 5'-monophosphate (XMP), so it can be reused for RNA or DNA synthesis.</text>
</comment>
<comment type="catalytic activity">
    <reaction evidence="1">
        <text>XMP + diphosphate = xanthine + 5-phospho-alpha-D-ribose 1-diphosphate</text>
        <dbReference type="Rhea" id="RHEA:10800"/>
        <dbReference type="ChEBI" id="CHEBI:17712"/>
        <dbReference type="ChEBI" id="CHEBI:33019"/>
        <dbReference type="ChEBI" id="CHEBI:57464"/>
        <dbReference type="ChEBI" id="CHEBI:58017"/>
        <dbReference type="EC" id="2.4.2.22"/>
    </reaction>
</comment>
<comment type="pathway">
    <text evidence="1">Purine metabolism; XMP biosynthesis via salvage pathway; XMP from xanthine: step 1/1.</text>
</comment>
<comment type="subunit">
    <text evidence="1">Homodimer.</text>
</comment>
<comment type="subcellular location">
    <subcellularLocation>
        <location evidence="1">Cytoplasm</location>
    </subcellularLocation>
</comment>
<comment type="similarity">
    <text evidence="1">Belongs to the purine/pyrimidine phosphoribosyltransferase family. Xpt subfamily.</text>
</comment>